<evidence type="ECO:0000255" key="1">
    <source>
        <dbReference type="HAMAP-Rule" id="MF_00242"/>
    </source>
</evidence>
<organism>
    <name type="scientific">Ectopseudomonas mendocina (strain ymp)</name>
    <name type="common">Pseudomonas mendocina</name>
    <dbReference type="NCBI Taxonomy" id="399739"/>
    <lineage>
        <taxon>Bacteria</taxon>
        <taxon>Pseudomonadati</taxon>
        <taxon>Pseudomonadota</taxon>
        <taxon>Gammaproteobacteria</taxon>
        <taxon>Pseudomonadales</taxon>
        <taxon>Pseudomonadaceae</taxon>
        <taxon>Ectopseudomonas</taxon>
    </lineage>
</organism>
<feature type="chain" id="PRO_0000336672" description="Arginine deiminase">
    <location>
        <begin position="1"/>
        <end position="416"/>
    </location>
</feature>
<feature type="active site" description="Amidino-cysteine intermediate" evidence="1">
    <location>
        <position position="404"/>
    </location>
</feature>
<gene>
    <name evidence="1" type="primary">arcA</name>
    <name type="ordered locus">Pmen_1108</name>
</gene>
<keyword id="KW-0056">Arginine metabolism</keyword>
<keyword id="KW-0963">Cytoplasm</keyword>
<keyword id="KW-0378">Hydrolase</keyword>
<dbReference type="EC" id="3.5.3.6" evidence="1"/>
<dbReference type="EMBL" id="CP000680">
    <property type="protein sequence ID" value="ABP83875.1"/>
    <property type="molecule type" value="Genomic_DNA"/>
</dbReference>
<dbReference type="SMR" id="A4XRA9"/>
<dbReference type="STRING" id="399739.Pmen_1108"/>
<dbReference type="KEGG" id="pmy:Pmen_1108"/>
<dbReference type="PATRIC" id="fig|399739.8.peg.1120"/>
<dbReference type="eggNOG" id="COG2235">
    <property type="taxonomic scope" value="Bacteria"/>
</dbReference>
<dbReference type="HOGENOM" id="CLU_052662_0_0_6"/>
<dbReference type="OrthoDB" id="9807502at2"/>
<dbReference type="UniPathway" id="UPA00254">
    <property type="reaction ID" value="UER00364"/>
</dbReference>
<dbReference type="GO" id="GO:0005737">
    <property type="term" value="C:cytoplasm"/>
    <property type="evidence" value="ECO:0007669"/>
    <property type="project" value="UniProtKB-SubCell"/>
</dbReference>
<dbReference type="GO" id="GO:0016990">
    <property type="term" value="F:arginine deiminase activity"/>
    <property type="evidence" value="ECO:0007669"/>
    <property type="project" value="UniProtKB-UniRule"/>
</dbReference>
<dbReference type="GO" id="GO:0019547">
    <property type="term" value="P:arginine catabolic process to ornithine"/>
    <property type="evidence" value="ECO:0007669"/>
    <property type="project" value="UniProtKB-UniRule"/>
</dbReference>
<dbReference type="GO" id="GO:0019546">
    <property type="term" value="P:arginine deiminase pathway"/>
    <property type="evidence" value="ECO:0007669"/>
    <property type="project" value="TreeGrafter"/>
</dbReference>
<dbReference type="Gene3D" id="1.10.3930.10">
    <property type="entry name" value="Arginine deiminase"/>
    <property type="match status" value="1"/>
</dbReference>
<dbReference type="Gene3D" id="3.75.10.10">
    <property type="entry name" value="L-arginine/glycine Amidinotransferase, Chain A"/>
    <property type="match status" value="1"/>
</dbReference>
<dbReference type="HAMAP" id="MF_00242">
    <property type="entry name" value="Arg_deiminase"/>
    <property type="match status" value="1"/>
</dbReference>
<dbReference type="InterPro" id="IPR003876">
    <property type="entry name" value="Arg_deiminase"/>
</dbReference>
<dbReference type="NCBIfam" id="TIGR01078">
    <property type="entry name" value="arcA"/>
    <property type="match status" value="1"/>
</dbReference>
<dbReference type="NCBIfam" id="NF002381">
    <property type="entry name" value="PRK01388.1"/>
    <property type="match status" value="1"/>
</dbReference>
<dbReference type="PANTHER" id="PTHR47271">
    <property type="entry name" value="ARGININE DEIMINASE"/>
    <property type="match status" value="1"/>
</dbReference>
<dbReference type="PANTHER" id="PTHR47271:SF3">
    <property type="entry name" value="ARGININE DEIMINASE"/>
    <property type="match status" value="1"/>
</dbReference>
<dbReference type="Pfam" id="PF02274">
    <property type="entry name" value="ADI"/>
    <property type="match status" value="1"/>
</dbReference>
<dbReference type="PIRSF" id="PIRSF006356">
    <property type="entry name" value="Arg_deiminase"/>
    <property type="match status" value="1"/>
</dbReference>
<dbReference type="PRINTS" id="PR01466">
    <property type="entry name" value="ARGDEIMINASE"/>
</dbReference>
<dbReference type="SUPFAM" id="SSF55909">
    <property type="entry name" value="Pentein"/>
    <property type="match status" value="1"/>
</dbReference>
<comment type="catalytic activity">
    <reaction evidence="1">
        <text>L-arginine + H2O = L-citrulline + NH4(+)</text>
        <dbReference type="Rhea" id="RHEA:19597"/>
        <dbReference type="ChEBI" id="CHEBI:15377"/>
        <dbReference type="ChEBI" id="CHEBI:28938"/>
        <dbReference type="ChEBI" id="CHEBI:32682"/>
        <dbReference type="ChEBI" id="CHEBI:57743"/>
        <dbReference type="EC" id="3.5.3.6"/>
    </reaction>
</comment>
<comment type="pathway">
    <text evidence="1">Amino-acid degradation; L-arginine degradation via ADI pathway; carbamoyl phosphate from L-arginine: step 1/2.</text>
</comment>
<comment type="subcellular location">
    <subcellularLocation>
        <location evidence="1">Cytoplasm</location>
    </subcellularLocation>
</comment>
<comment type="similarity">
    <text evidence="1">Belongs to the arginine deiminase family.</text>
</comment>
<name>ARCA_ECTM1</name>
<sequence length="416" mass="45964">MSKKALGVHSEAGKLHKVMVCSPGLAHLRLTPNNCDELLFDDVIWVSQAKRDHFDFMTKMRERGIEVVEMHNLLEETVRDPQALKWILDRKITPNSVGLGLQGEVRSFIEGLEPRRIAEFLIGGVSGADLAKHKDSEAAKMFNAYLGESSFIFPPLPNTQFTRDTTCWIYGGVTLNPMYWPARRQETLLTSAIYKFHPDFAGEQFEIWYGDPDQDHGAATLEGGDVMPIGNGTVLIGMGERTSHQAIGQVARALFAKGAAQRVVVAGLGKSRAAMHLDTVFSFCDRDLVTIFPEVANSIVPFSLRPDESRPGGIDVRREDKSFLDVVAESLNLPKLRVVETGGDAYEAEREQWDDGNNVVCLEPGVVVGYDRNTYTNTLLRKAGVEVITISASELGRGRGGGHCMTCPIIRDPIDY</sequence>
<protein>
    <recommendedName>
        <fullName evidence="1">Arginine deiminase</fullName>
        <shortName evidence="1">ADI</shortName>
        <ecNumber evidence="1">3.5.3.6</ecNumber>
    </recommendedName>
    <alternativeName>
        <fullName evidence="1">Arginine dihydrolase</fullName>
        <shortName evidence="1">AD</shortName>
    </alternativeName>
</protein>
<proteinExistence type="inferred from homology"/>
<accession>A4XRA9</accession>
<reference key="1">
    <citation type="submission" date="2007-04" db="EMBL/GenBank/DDBJ databases">
        <title>Complete sequence of Pseudomonas mendocina ymp.</title>
        <authorList>
            <consortium name="US DOE Joint Genome Institute"/>
            <person name="Copeland A."/>
            <person name="Lucas S."/>
            <person name="Lapidus A."/>
            <person name="Barry K."/>
            <person name="Glavina del Rio T."/>
            <person name="Dalin E."/>
            <person name="Tice H."/>
            <person name="Pitluck S."/>
            <person name="Kiss H."/>
            <person name="Brettin T."/>
            <person name="Detter J.C."/>
            <person name="Bruce D."/>
            <person name="Han C."/>
            <person name="Schmutz J."/>
            <person name="Larimer F."/>
            <person name="Land M."/>
            <person name="Hauser L."/>
            <person name="Kyrpides N."/>
            <person name="Mikhailova N."/>
            <person name="Hersman L."/>
            <person name="Dubois J."/>
            <person name="Maurice P."/>
            <person name="Richardson P."/>
        </authorList>
    </citation>
    <scope>NUCLEOTIDE SEQUENCE [LARGE SCALE GENOMIC DNA]</scope>
    <source>
        <strain>ymp</strain>
    </source>
</reference>